<proteinExistence type="evidence at transcript level"/>
<sequence>MDAFATSPTSALIKAVNCIAHVTPMAGEDSSENRRASNYKPSTWDYEFLQSLATSHNTVQEKHMKMAEKLKEEVKSMIKGQMEPVAKLELINIVQRLGLKYRFESEIKEELFSLYKDGTDAWWVDNLHATALRFRLLRENGIFVPQDVFETFKDKSGKFKSQLCKDVRGLLSLYEASYLGWEGEDLLDEAKKFSTTNLNNVKESISSNTLGRLVKHALNLPLHWSAARYEARWFIDEYEKEENVNPNLLKYAKLDFNIVQSIHQGELGNLARWWVETGLDKLSFVRNTLMQNFMWGCAMVFEPQYGKVRDAAVKQASLIAMVDDVYDVYGSLEELEIFTDIVDRWDITGIDKLPRNISMILLTMFNTANQIGYDLLRDRGFNGIPHIAQAWATLCKKYLKEAKWYHSGYKPTLEEYLENGLVSISFVLSLVTAYLQTETLENLTYESAAYVNSVPPLVRYSGLLNRLYNDLGTSSAEIARGDTLKSIQCYMTQTGATEEAAREHIKGLVHEAWKGMNKCLFEQTPFAEPFVGFNVNTVRGSQFFYQHGDGYAVTESWTKDLSLSVLIHPIPLNEED</sequence>
<reference key="1">
    <citation type="journal article" date="2011" name="J. Biol. Chem.">
        <title>Sandalwood fragrance biosynthesis involves sesquiterpene synthases of both the terpene synthase (TPS)-a and TPS-b Subfamilies, including santalene synthases.</title>
        <authorList>
            <person name="Jones C.G."/>
            <person name="Moniodis J."/>
            <person name="Zulak K.G."/>
            <person name="Scaffidi A."/>
            <person name="Plummer J.A."/>
            <person name="Ghisalberti E.L."/>
            <person name="Barbour E.L."/>
            <person name="Bohlmann J."/>
        </authorList>
    </citation>
    <scope>NUCLEOTIDE SEQUENCE [GENOMIC DNA / MRNA]</scope>
    <scope>FUNCTION</scope>
</reference>
<comment type="function">
    <text evidence="3">Produces almost exclusively beta-bisabolene and only traces of alpha-bisabolol from (2E,6E)-farnesyl diphosphate in fragrance biosynthesis.</text>
</comment>
<comment type="cofactor">
    <cofactor evidence="1">
        <name>Mg(2+)</name>
        <dbReference type="ChEBI" id="CHEBI:18420"/>
    </cofactor>
    <cofactor evidence="1">
        <name>Mn(2+)</name>
        <dbReference type="ChEBI" id="CHEBI:29035"/>
    </cofactor>
    <text evidence="1">Binds 3 Mg(2+) or Mn(2+) ions per subunit.</text>
</comment>
<comment type="domain">
    <text evidence="2">The Asp-Asp-Xaa-Xaa-Asp/Glu (DDXXD/E) motif is important for the catalytic activity, presumably through binding to Mg(2+).</text>
</comment>
<comment type="similarity">
    <text evidence="4">Belongs to the terpene synthase family. Tpsb subfamily.</text>
</comment>
<organism>
    <name type="scientific">Santalum austrocaledonicum</name>
    <name type="common">Sandalwood</name>
    <dbReference type="NCBI Taxonomy" id="293154"/>
    <lineage>
        <taxon>Eukaryota</taxon>
        <taxon>Viridiplantae</taxon>
        <taxon>Streptophyta</taxon>
        <taxon>Embryophyta</taxon>
        <taxon>Tracheophyta</taxon>
        <taxon>Spermatophyta</taxon>
        <taxon>Magnoliopsida</taxon>
        <taxon>eudicotyledons</taxon>
        <taxon>Gunneridae</taxon>
        <taxon>Pentapetalae</taxon>
        <taxon>Santalales</taxon>
        <taxon>Santalaceae</taxon>
        <taxon>Santalum</taxon>
    </lineage>
</organism>
<keyword id="KW-0456">Lyase</keyword>
<keyword id="KW-0460">Magnesium</keyword>
<keyword id="KW-0464">Manganese</keyword>
<keyword id="KW-0479">Metal-binding</keyword>
<name>SAUBS_SANAS</name>
<dbReference type="EC" id="4.2.3.-" evidence="3"/>
<dbReference type="EMBL" id="HQ343279">
    <property type="protein sequence ID" value="ADO87003.1"/>
    <property type="molecule type" value="mRNA"/>
</dbReference>
<dbReference type="EMBL" id="JF746813">
    <property type="protein sequence ID" value="AEF32531.1"/>
    <property type="molecule type" value="Genomic_DNA"/>
</dbReference>
<dbReference type="SMR" id="E3W205"/>
<dbReference type="GO" id="GO:0000287">
    <property type="term" value="F:magnesium ion binding"/>
    <property type="evidence" value="ECO:0007669"/>
    <property type="project" value="InterPro"/>
</dbReference>
<dbReference type="GO" id="GO:0010333">
    <property type="term" value="F:terpene synthase activity"/>
    <property type="evidence" value="ECO:0007669"/>
    <property type="project" value="InterPro"/>
</dbReference>
<dbReference type="GO" id="GO:0016102">
    <property type="term" value="P:diterpenoid biosynthetic process"/>
    <property type="evidence" value="ECO:0007669"/>
    <property type="project" value="InterPro"/>
</dbReference>
<dbReference type="CDD" id="cd00684">
    <property type="entry name" value="Terpene_cyclase_plant_C1"/>
    <property type="match status" value="1"/>
</dbReference>
<dbReference type="FunFam" id="1.10.600.10:FF:000007">
    <property type="entry name" value="Isoprene synthase, chloroplastic"/>
    <property type="match status" value="1"/>
</dbReference>
<dbReference type="FunFam" id="1.50.10.130:FF:000001">
    <property type="entry name" value="Isoprene synthase, chloroplastic"/>
    <property type="match status" value="1"/>
</dbReference>
<dbReference type="Gene3D" id="1.10.600.10">
    <property type="entry name" value="Farnesyl Diphosphate Synthase"/>
    <property type="match status" value="1"/>
</dbReference>
<dbReference type="Gene3D" id="1.50.10.130">
    <property type="entry name" value="Terpene synthase, N-terminal domain"/>
    <property type="match status" value="1"/>
</dbReference>
<dbReference type="InterPro" id="IPR008949">
    <property type="entry name" value="Isoprenoid_synthase_dom_sf"/>
</dbReference>
<dbReference type="InterPro" id="IPR034741">
    <property type="entry name" value="Terpene_cyclase-like_1_C"/>
</dbReference>
<dbReference type="InterPro" id="IPR044814">
    <property type="entry name" value="Terpene_cyclase_plant_C1"/>
</dbReference>
<dbReference type="InterPro" id="IPR001906">
    <property type="entry name" value="Terpene_synth_N"/>
</dbReference>
<dbReference type="InterPro" id="IPR036965">
    <property type="entry name" value="Terpene_synth_N_sf"/>
</dbReference>
<dbReference type="InterPro" id="IPR050148">
    <property type="entry name" value="Terpene_synthase-like"/>
</dbReference>
<dbReference type="InterPro" id="IPR005630">
    <property type="entry name" value="Terpene_synthase_metal-bd"/>
</dbReference>
<dbReference type="InterPro" id="IPR008930">
    <property type="entry name" value="Terpenoid_cyclase/PrenylTrfase"/>
</dbReference>
<dbReference type="PANTHER" id="PTHR31225:SF245">
    <property type="entry name" value="(-)-ALPHA-TERPINEOL SYNTHASE-LIKE"/>
    <property type="match status" value="1"/>
</dbReference>
<dbReference type="PANTHER" id="PTHR31225">
    <property type="entry name" value="OS04G0344100 PROTEIN-RELATED"/>
    <property type="match status" value="1"/>
</dbReference>
<dbReference type="Pfam" id="PF01397">
    <property type="entry name" value="Terpene_synth"/>
    <property type="match status" value="1"/>
</dbReference>
<dbReference type="Pfam" id="PF03936">
    <property type="entry name" value="Terpene_synth_C"/>
    <property type="match status" value="1"/>
</dbReference>
<dbReference type="SFLD" id="SFLDS00005">
    <property type="entry name" value="Isoprenoid_Synthase_Type_I"/>
    <property type="match status" value="1"/>
</dbReference>
<dbReference type="SFLD" id="SFLDG01019">
    <property type="entry name" value="Terpene_Cyclase_Like_1_C_Termi"/>
    <property type="match status" value="1"/>
</dbReference>
<dbReference type="SUPFAM" id="SSF48239">
    <property type="entry name" value="Terpenoid cyclases/Protein prenyltransferases"/>
    <property type="match status" value="1"/>
</dbReference>
<dbReference type="SUPFAM" id="SSF48576">
    <property type="entry name" value="Terpenoid synthases"/>
    <property type="match status" value="1"/>
</dbReference>
<protein>
    <recommendedName>
        <fullName>Beta-bisabolene synthase</fullName>
        <shortName>SauBS</shortName>
        <ecNumber evidence="3">4.2.3.-</ecNumber>
    </recommendedName>
</protein>
<feature type="chain" id="PRO_0000418945" description="Beta-bisabolene synthase">
    <location>
        <begin position="1"/>
        <end position="576"/>
    </location>
</feature>
<feature type="short sequence motif" description="DDXXD motif" evidence="2">
    <location>
        <begin position="323"/>
        <end position="327"/>
    </location>
</feature>
<feature type="binding site" evidence="2">
    <location>
        <position position="286"/>
    </location>
    <ligand>
        <name>(2E,6E)-farnesyl diphosphate</name>
        <dbReference type="ChEBI" id="CHEBI:175763"/>
    </ligand>
</feature>
<feature type="binding site" evidence="2">
    <location>
        <position position="323"/>
    </location>
    <ligand>
        <name>(2E,6E)-farnesyl diphosphate</name>
        <dbReference type="ChEBI" id="CHEBI:175763"/>
    </ligand>
</feature>
<feature type="binding site" evidence="2">
    <location>
        <position position="323"/>
    </location>
    <ligand>
        <name>Mg(2+)</name>
        <dbReference type="ChEBI" id="CHEBI:18420"/>
        <label>1</label>
    </ligand>
</feature>
<feature type="binding site" evidence="2">
    <location>
        <position position="323"/>
    </location>
    <ligand>
        <name>Mg(2+)</name>
        <dbReference type="ChEBI" id="CHEBI:18420"/>
        <label>2</label>
    </ligand>
</feature>
<feature type="binding site" evidence="2">
    <location>
        <position position="327"/>
    </location>
    <ligand>
        <name>(2E,6E)-farnesyl diphosphate</name>
        <dbReference type="ChEBI" id="CHEBI:175763"/>
    </ligand>
</feature>
<feature type="binding site" evidence="2">
    <location>
        <position position="327"/>
    </location>
    <ligand>
        <name>Mg(2+)</name>
        <dbReference type="ChEBI" id="CHEBI:18420"/>
        <label>1</label>
    </ligand>
</feature>
<feature type="binding site" evidence="2">
    <location>
        <position position="327"/>
    </location>
    <ligand>
        <name>Mg(2+)</name>
        <dbReference type="ChEBI" id="CHEBI:18420"/>
        <label>2</label>
    </ligand>
</feature>
<feature type="binding site" evidence="2">
    <location>
        <position position="466"/>
    </location>
    <ligand>
        <name>(2E,6E)-farnesyl diphosphate</name>
        <dbReference type="ChEBI" id="CHEBI:175763"/>
    </ligand>
</feature>
<feature type="binding site" evidence="2">
    <location>
        <position position="469"/>
    </location>
    <ligand>
        <name>(2E,6E)-farnesyl diphosphate</name>
        <dbReference type="ChEBI" id="CHEBI:175763"/>
    </ligand>
</feature>
<feature type="binding site" evidence="2">
    <location>
        <position position="469"/>
    </location>
    <ligand>
        <name>Mg(2+)</name>
        <dbReference type="ChEBI" id="CHEBI:18420"/>
        <label>3</label>
    </ligand>
</feature>
<feature type="binding site" evidence="2">
    <location>
        <position position="473"/>
    </location>
    <ligand>
        <name>Mg(2+)</name>
        <dbReference type="ChEBI" id="CHEBI:18420"/>
        <label>3</label>
    </ligand>
</feature>
<feature type="binding site" evidence="2">
    <location>
        <position position="477"/>
    </location>
    <ligand>
        <name>Mg(2+)</name>
        <dbReference type="ChEBI" id="CHEBI:18420"/>
        <label>3</label>
    </ligand>
</feature>
<feature type="sequence conflict" description="In Ref. 1; ADO87003." evidence="4" ref="1">
    <original>K</original>
    <variation>E</variation>
    <location>
        <position position="202"/>
    </location>
</feature>
<evidence type="ECO:0000250" key="1">
    <source>
        <dbReference type="UniProtKB" id="A0A1C9J6A7"/>
    </source>
</evidence>
<evidence type="ECO:0000250" key="2">
    <source>
        <dbReference type="UniProtKB" id="Q40577"/>
    </source>
</evidence>
<evidence type="ECO:0000269" key="3">
    <source>
    </source>
</evidence>
<evidence type="ECO:0000305" key="4"/>
<accession>E3W205</accession>
<accession>F6M8H9</accession>